<evidence type="ECO:0000250" key="1"/>
<evidence type="ECO:0000250" key="2">
    <source>
        <dbReference type="UniProtKB" id="Q9NX14"/>
    </source>
</evidence>
<evidence type="ECO:0000255" key="3"/>
<evidence type="ECO:0000256" key="4">
    <source>
        <dbReference type="SAM" id="MobiDB-lite"/>
    </source>
</evidence>
<evidence type="ECO:0000269" key="5">
    <source>
    </source>
</evidence>
<evidence type="ECO:0000305" key="6"/>
<evidence type="ECO:0007744" key="7">
    <source>
        <dbReference type="PDB" id="8PW5"/>
    </source>
</evidence>
<evidence type="ECO:0007829" key="8">
    <source>
        <dbReference type="PDB" id="8OM1"/>
    </source>
</evidence>
<organism>
    <name type="scientific">Mus musculus</name>
    <name type="common">Mouse</name>
    <dbReference type="NCBI Taxonomy" id="10090"/>
    <lineage>
        <taxon>Eukaryota</taxon>
        <taxon>Metazoa</taxon>
        <taxon>Chordata</taxon>
        <taxon>Craniata</taxon>
        <taxon>Vertebrata</taxon>
        <taxon>Euteleostomi</taxon>
        <taxon>Mammalia</taxon>
        <taxon>Eutheria</taxon>
        <taxon>Euarchontoglires</taxon>
        <taxon>Glires</taxon>
        <taxon>Rodentia</taxon>
        <taxon>Myomorpha</taxon>
        <taxon>Muroidea</taxon>
        <taxon>Muridae</taxon>
        <taxon>Murinae</taxon>
        <taxon>Mus</taxon>
        <taxon>Mus</taxon>
    </lineage>
</organism>
<dbReference type="EMBL" id="Y08702">
    <property type="protein sequence ID" value="CAA69961.1"/>
    <property type="status" value="ALT_INIT"/>
    <property type="molecule type" value="mRNA"/>
</dbReference>
<dbReference type="EMBL" id="AK028121">
    <property type="protein sequence ID" value="BAC25760.1"/>
    <property type="status" value="ALT_INIT"/>
    <property type="molecule type" value="mRNA"/>
</dbReference>
<dbReference type="EMBL" id="BC027265">
    <property type="protein sequence ID" value="AAH27265.1"/>
    <property type="status" value="ALT_INIT"/>
    <property type="molecule type" value="mRNA"/>
</dbReference>
<dbReference type="CCDS" id="CCDS53012.1"/>
<dbReference type="RefSeq" id="NP_001345553.1">
    <property type="nucleotide sequence ID" value="NM_001358624.1"/>
</dbReference>
<dbReference type="RefSeq" id="NP_062308.2">
    <property type="nucleotide sequence ID" value="NM_019435.5"/>
</dbReference>
<dbReference type="RefSeq" id="XP_006527617.1">
    <property type="nucleotide sequence ID" value="XM_006527554.1"/>
</dbReference>
<dbReference type="PDB" id="6G2J">
    <property type="method" value="EM"/>
    <property type="resolution" value="3.30 A"/>
    <property type="chains" value="g=1-151"/>
</dbReference>
<dbReference type="PDB" id="6G72">
    <property type="method" value="EM"/>
    <property type="resolution" value="3.90 A"/>
    <property type="chains" value="g=1-151"/>
</dbReference>
<dbReference type="PDB" id="6ZR2">
    <property type="method" value="EM"/>
    <property type="resolution" value="3.10 A"/>
    <property type="chains" value="g=1-151"/>
</dbReference>
<dbReference type="PDB" id="6ZTQ">
    <property type="method" value="EM"/>
    <property type="resolution" value="3.00 A"/>
    <property type="chains" value="g=1-151"/>
</dbReference>
<dbReference type="PDB" id="7AK5">
    <property type="method" value="EM"/>
    <property type="resolution" value="3.17 A"/>
    <property type="chains" value="g=1-151"/>
</dbReference>
<dbReference type="PDB" id="7AK6">
    <property type="method" value="EM"/>
    <property type="resolution" value="3.82 A"/>
    <property type="chains" value="g=1-151"/>
</dbReference>
<dbReference type="PDB" id="7B93">
    <property type="method" value="EM"/>
    <property type="resolution" value="3.04 A"/>
    <property type="chains" value="g=1-151"/>
</dbReference>
<dbReference type="PDB" id="7PSA">
    <property type="method" value="EM"/>
    <property type="resolution" value="3.40 A"/>
    <property type="chains" value="g=1-151"/>
</dbReference>
<dbReference type="PDB" id="8C2S">
    <property type="method" value="EM"/>
    <property type="resolution" value="3.90 A"/>
    <property type="chains" value="g=1-151"/>
</dbReference>
<dbReference type="PDB" id="8CA3">
    <property type="method" value="EM"/>
    <property type="resolution" value="3.20 A"/>
    <property type="chains" value="g=1-151"/>
</dbReference>
<dbReference type="PDB" id="8CA5">
    <property type="method" value="EM"/>
    <property type="resolution" value="3.90 A"/>
    <property type="chains" value="g=1-151"/>
</dbReference>
<dbReference type="PDB" id="8IAO">
    <property type="method" value="EM"/>
    <property type="resolution" value="4.20 A"/>
    <property type="chains" value="g=1-151"/>
</dbReference>
<dbReference type="PDB" id="8IAQ">
    <property type="method" value="EM"/>
    <property type="resolution" value="3.40 A"/>
    <property type="chains" value="g=1-151"/>
</dbReference>
<dbReference type="PDB" id="8IB4">
    <property type="method" value="EM"/>
    <property type="resolution" value="4.30 A"/>
    <property type="chains" value="g=1-151"/>
</dbReference>
<dbReference type="PDB" id="8IB6">
    <property type="method" value="EM"/>
    <property type="resolution" value="3.30 A"/>
    <property type="chains" value="g=1-151"/>
</dbReference>
<dbReference type="PDB" id="8IB9">
    <property type="method" value="EM"/>
    <property type="resolution" value="4.30 A"/>
    <property type="chains" value="g=1-151"/>
</dbReference>
<dbReference type="PDB" id="8IBB">
    <property type="method" value="EM"/>
    <property type="resolution" value="3.30 A"/>
    <property type="chains" value="g=1-151"/>
</dbReference>
<dbReference type="PDB" id="8IBD">
    <property type="method" value="EM"/>
    <property type="resolution" value="4.20 A"/>
    <property type="chains" value="g=1-151"/>
</dbReference>
<dbReference type="PDB" id="8IBF">
    <property type="method" value="EM"/>
    <property type="resolution" value="3.30 A"/>
    <property type="chains" value="g=1-151"/>
</dbReference>
<dbReference type="PDB" id="8IC2">
    <property type="method" value="EM"/>
    <property type="resolution" value="6.30 A"/>
    <property type="chains" value="g=1-151"/>
</dbReference>
<dbReference type="PDB" id="8IC4">
    <property type="method" value="EM"/>
    <property type="resolution" value="3.20 A"/>
    <property type="chains" value="g=1-151"/>
</dbReference>
<dbReference type="PDB" id="8OLT">
    <property type="method" value="EM"/>
    <property type="resolution" value="2.84 A"/>
    <property type="chains" value="g=1-151"/>
</dbReference>
<dbReference type="PDB" id="8OM1">
    <property type="method" value="EM"/>
    <property type="resolution" value="2.39 A"/>
    <property type="chains" value="g=1-151"/>
</dbReference>
<dbReference type="PDB" id="8PW5">
    <property type="method" value="EM"/>
    <property type="resolution" value="3.60 A"/>
    <property type="chains" value="g1=1-151"/>
</dbReference>
<dbReference type="PDB" id="8PW6">
    <property type="method" value="EM"/>
    <property type="resolution" value="3.30 A"/>
    <property type="chains" value="g1=1-151"/>
</dbReference>
<dbReference type="PDB" id="8PW7">
    <property type="method" value="EM"/>
    <property type="resolution" value="3.50 A"/>
    <property type="chains" value="g1=1-151"/>
</dbReference>
<dbReference type="PDB" id="8RGP">
    <property type="method" value="EM"/>
    <property type="resolution" value="3.00 A"/>
    <property type="chains" value="g=1-151"/>
</dbReference>
<dbReference type="PDB" id="8RGQ">
    <property type="method" value="EM"/>
    <property type="resolution" value="3.00 A"/>
    <property type="chains" value="g=1-151"/>
</dbReference>
<dbReference type="PDB" id="8RGR">
    <property type="method" value="EM"/>
    <property type="resolution" value="2.90 A"/>
    <property type="chains" value="g=1-151"/>
</dbReference>
<dbReference type="PDB" id="8RGT">
    <property type="method" value="EM"/>
    <property type="resolution" value="3.10 A"/>
    <property type="chains" value="g=1-151"/>
</dbReference>
<dbReference type="PDB" id="8UCA">
    <property type="method" value="EM"/>
    <property type="resolution" value="3.70 A"/>
    <property type="chains" value="BM/bm=1-151"/>
</dbReference>
<dbReference type="PDBsum" id="6G2J"/>
<dbReference type="PDBsum" id="6G72"/>
<dbReference type="PDBsum" id="6ZR2"/>
<dbReference type="PDBsum" id="6ZTQ"/>
<dbReference type="PDBsum" id="7AK5"/>
<dbReference type="PDBsum" id="7AK6"/>
<dbReference type="PDBsum" id="7B93"/>
<dbReference type="PDBsum" id="7PSA"/>
<dbReference type="PDBsum" id="8C2S"/>
<dbReference type="PDBsum" id="8CA3"/>
<dbReference type="PDBsum" id="8CA5"/>
<dbReference type="PDBsum" id="8IAO"/>
<dbReference type="PDBsum" id="8IAQ"/>
<dbReference type="PDBsum" id="8IB4"/>
<dbReference type="PDBsum" id="8IB6"/>
<dbReference type="PDBsum" id="8IB9"/>
<dbReference type="PDBsum" id="8IBB"/>
<dbReference type="PDBsum" id="8IBD"/>
<dbReference type="PDBsum" id="8IBF"/>
<dbReference type="PDBsum" id="8IC2"/>
<dbReference type="PDBsum" id="8IC4"/>
<dbReference type="PDBsum" id="8OLT"/>
<dbReference type="PDBsum" id="8OM1"/>
<dbReference type="PDBsum" id="8PW5"/>
<dbReference type="PDBsum" id="8PW6"/>
<dbReference type="PDBsum" id="8PW7"/>
<dbReference type="PDBsum" id="8RGP"/>
<dbReference type="PDBsum" id="8RGQ"/>
<dbReference type="PDBsum" id="8RGR"/>
<dbReference type="PDBsum" id="8RGT"/>
<dbReference type="PDBsum" id="8UCA"/>
<dbReference type="EMDB" id="EMD-11377"/>
<dbReference type="EMDB" id="EMD-11424"/>
<dbReference type="EMDB" id="EMD-11810"/>
<dbReference type="EMDB" id="EMD-11811"/>
<dbReference type="EMDB" id="EMD-12095"/>
<dbReference type="EMDB" id="EMD-13611"/>
<dbReference type="EMDB" id="EMD-16398"/>
<dbReference type="EMDB" id="EMD-16516"/>
<dbReference type="EMDB" id="EMD-16518"/>
<dbReference type="EMDB" id="EMD-16962"/>
<dbReference type="EMDB" id="EMD-16965"/>
<dbReference type="EMDB" id="EMD-17989"/>
<dbReference type="EMDB" id="EMD-17990"/>
<dbReference type="EMDB" id="EMD-17991"/>
<dbReference type="EMDB" id="EMD-19145"/>
<dbReference type="EMDB" id="EMD-19146"/>
<dbReference type="EMDB" id="EMD-19147"/>
<dbReference type="EMDB" id="EMD-19148"/>
<dbReference type="EMDB" id="EMD-35313"/>
<dbReference type="EMDB" id="EMD-35315"/>
<dbReference type="EMDB" id="EMD-35331"/>
<dbReference type="EMDB" id="EMD-35333"/>
<dbReference type="EMDB" id="EMD-35336"/>
<dbReference type="EMDB" id="EMD-35338"/>
<dbReference type="EMDB" id="EMD-35340"/>
<dbReference type="EMDB" id="EMD-35342"/>
<dbReference type="EMDB" id="EMD-35352"/>
<dbReference type="EMDB" id="EMD-35354"/>
<dbReference type="EMDB" id="EMD-42122"/>
<dbReference type="EMDB" id="EMD-4345"/>
<dbReference type="EMDB" id="EMD-4356"/>
<dbReference type="SMR" id="O09111"/>
<dbReference type="BioGRID" id="222383">
    <property type="interactions" value="11"/>
</dbReference>
<dbReference type="ComplexPortal" id="CPX-266">
    <property type="entry name" value="Mitochondrial respiratory chain complex I"/>
</dbReference>
<dbReference type="CORUM" id="O09111"/>
<dbReference type="FunCoup" id="O09111">
    <property type="interactions" value="1146"/>
</dbReference>
<dbReference type="IntAct" id="O09111">
    <property type="interactions" value="3"/>
</dbReference>
<dbReference type="STRING" id="10090.ENSMUSP00000112320"/>
<dbReference type="GlyGen" id="O09111">
    <property type="glycosylation" value="1 site, 1 O-linked glycan (1 site)"/>
</dbReference>
<dbReference type="iPTMnet" id="O09111"/>
<dbReference type="MetOSite" id="O09111"/>
<dbReference type="PhosphoSitePlus" id="O09111"/>
<dbReference type="SwissPalm" id="O09111"/>
<dbReference type="jPOST" id="O09111"/>
<dbReference type="PaxDb" id="10090-ENSMUSP00000112320"/>
<dbReference type="PeptideAtlas" id="O09111"/>
<dbReference type="ProteomicsDB" id="293643"/>
<dbReference type="Pumba" id="O09111"/>
<dbReference type="TopDownProteomics" id="O09111"/>
<dbReference type="DNASU" id="104130"/>
<dbReference type="Ensembl" id="ENSMUST00000116621.2">
    <property type="protein sequence ID" value="ENSMUSP00000112320.2"/>
    <property type="gene ID" value="ENSMUSG00000031059.10"/>
</dbReference>
<dbReference type="GeneID" id="104130"/>
<dbReference type="KEGG" id="mmu:104130"/>
<dbReference type="UCSC" id="uc009ste.2">
    <property type="organism name" value="mouse"/>
</dbReference>
<dbReference type="AGR" id="MGI:1349919"/>
<dbReference type="CTD" id="54539"/>
<dbReference type="MGI" id="MGI:1349919">
    <property type="gene designation" value="Ndufb11"/>
</dbReference>
<dbReference type="VEuPathDB" id="HostDB:ENSMUSG00000031059"/>
<dbReference type="eggNOG" id="KOG4808">
    <property type="taxonomic scope" value="Eukaryota"/>
</dbReference>
<dbReference type="GeneTree" id="ENSGT00390000003022"/>
<dbReference type="HOGENOM" id="CLU_109862_0_0_1"/>
<dbReference type="InParanoid" id="O09111"/>
<dbReference type="OMA" id="DYRMKEW"/>
<dbReference type="OrthoDB" id="5917019at2759"/>
<dbReference type="PhylomeDB" id="O09111"/>
<dbReference type="TreeFam" id="TF314671"/>
<dbReference type="Reactome" id="R-MMU-611105">
    <property type="pathway name" value="Respiratory electron transport"/>
</dbReference>
<dbReference type="Reactome" id="R-MMU-6799198">
    <property type="pathway name" value="Complex I biogenesis"/>
</dbReference>
<dbReference type="BioGRID-ORCS" id="104130">
    <property type="hits" value="25 hits in 75 CRISPR screens"/>
</dbReference>
<dbReference type="CD-CODE" id="CE726F99">
    <property type="entry name" value="Postsynaptic density"/>
</dbReference>
<dbReference type="ChiTaRS" id="Ndufb11">
    <property type="organism name" value="mouse"/>
</dbReference>
<dbReference type="PRO" id="PR:O09111"/>
<dbReference type="Proteomes" id="UP000000589">
    <property type="component" value="Chromosome X"/>
</dbReference>
<dbReference type="RNAct" id="O09111">
    <property type="molecule type" value="protein"/>
</dbReference>
<dbReference type="Bgee" id="ENSMUSG00000031059">
    <property type="expression patterns" value="Expressed in temporalis muscle and 267 other cell types or tissues"/>
</dbReference>
<dbReference type="GO" id="GO:0005743">
    <property type="term" value="C:mitochondrial inner membrane"/>
    <property type="evidence" value="ECO:0000314"/>
    <property type="project" value="UniProtKB"/>
</dbReference>
<dbReference type="GO" id="GO:0005739">
    <property type="term" value="C:mitochondrion"/>
    <property type="evidence" value="ECO:0007005"/>
    <property type="project" value="MGI"/>
</dbReference>
<dbReference type="GO" id="GO:0045271">
    <property type="term" value="C:respiratory chain complex I"/>
    <property type="evidence" value="ECO:0000314"/>
    <property type="project" value="UniProtKB"/>
</dbReference>
<dbReference type="GO" id="GO:0009060">
    <property type="term" value="P:aerobic respiration"/>
    <property type="evidence" value="ECO:0000303"/>
    <property type="project" value="ComplexPortal"/>
</dbReference>
<dbReference type="GO" id="GO:0042776">
    <property type="term" value="P:proton motive force-driven mitochondrial ATP synthesis"/>
    <property type="evidence" value="ECO:0000303"/>
    <property type="project" value="ComplexPortal"/>
</dbReference>
<dbReference type="InterPro" id="IPR019329">
    <property type="entry name" value="NADH_UbQ_OxRdtase_ESSS_su"/>
</dbReference>
<dbReference type="PANTHER" id="PTHR13327:SF1">
    <property type="entry name" value="NADH DEHYDROGENASE [UBIQUINONE] 1 BETA SUBCOMPLEX SUBUNIT 11, MITOCHONDRIAL"/>
    <property type="match status" value="1"/>
</dbReference>
<dbReference type="PANTHER" id="PTHR13327">
    <property type="entry name" value="NADH-UBIQUINONE OXIDOREDUCTASE ESSS SUBUNIT, MITOCHONDRIAL PRECURSOR"/>
    <property type="match status" value="1"/>
</dbReference>
<dbReference type="Pfam" id="PF10183">
    <property type="entry name" value="ESSS"/>
    <property type="match status" value="1"/>
</dbReference>
<sequence>MAARLLSLYGRCLSAAGAMRGLPAARVRWESSRAVIAPSGVEKKRQREPTMQWQEDPEPEDENVYAKNPDFHGYDSDPVVDVWNMRAVFFFGFSIVLVFGTTFVAYVPDYRMQEWARREAERLVKYREVNGLPIMESNYFDPSKIQLPEDD</sequence>
<name>NDUBB_MOUSE</name>
<proteinExistence type="evidence at protein level"/>
<reference key="1">
    <citation type="submission" date="1996-10" db="EMBL/GenBank/DDBJ databases">
        <title>Molecular cloning of mouse NP15.6 a novel neuronal protein whose expression is developmentally regulated.</title>
        <authorList>
            <person name="Rogister B."/>
            <person name="Mazy-Servais C."/>
            <person name="Leprince P."/>
            <person name="Schilz F."/>
            <person name="Moonen G."/>
        </authorList>
    </citation>
    <scope>NUCLEOTIDE SEQUENCE [MRNA] OF 2-151</scope>
</reference>
<reference key="2">
    <citation type="journal article" date="2005" name="Science">
        <title>The transcriptional landscape of the mammalian genome.</title>
        <authorList>
            <person name="Carninci P."/>
            <person name="Kasukawa T."/>
            <person name="Katayama S."/>
            <person name="Gough J."/>
            <person name="Frith M.C."/>
            <person name="Maeda N."/>
            <person name="Oyama R."/>
            <person name="Ravasi T."/>
            <person name="Lenhard B."/>
            <person name="Wells C."/>
            <person name="Kodzius R."/>
            <person name="Shimokawa K."/>
            <person name="Bajic V.B."/>
            <person name="Brenner S.E."/>
            <person name="Batalov S."/>
            <person name="Forrest A.R."/>
            <person name="Zavolan M."/>
            <person name="Davis M.J."/>
            <person name="Wilming L.G."/>
            <person name="Aidinis V."/>
            <person name="Allen J.E."/>
            <person name="Ambesi-Impiombato A."/>
            <person name="Apweiler R."/>
            <person name="Aturaliya R.N."/>
            <person name="Bailey T.L."/>
            <person name="Bansal M."/>
            <person name="Baxter L."/>
            <person name="Beisel K.W."/>
            <person name="Bersano T."/>
            <person name="Bono H."/>
            <person name="Chalk A.M."/>
            <person name="Chiu K.P."/>
            <person name="Choudhary V."/>
            <person name="Christoffels A."/>
            <person name="Clutterbuck D.R."/>
            <person name="Crowe M.L."/>
            <person name="Dalla E."/>
            <person name="Dalrymple B.P."/>
            <person name="de Bono B."/>
            <person name="Della Gatta G."/>
            <person name="di Bernardo D."/>
            <person name="Down T."/>
            <person name="Engstrom P."/>
            <person name="Fagiolini M."/>
            <person name="Faulkner G."/>
            <person name="Fletcher C.F."/>
            <person name="Fukushima T."/>
            <person name="Furuno M."/>
            <person name="Futaki S."/>
            <person name="Gariboldi M."/>
            <person name="Georgii-Hemming P."/>
            <person name="Gingeras T.R."/>
            <person name="Gojobori T."/>
            <person name="Green R.E."/>
            <person name="Gustincich S."/>
            <person name="Harbers M."/>
            <person name="Hayashi Y."/>
            <person name="Hensch T.K."/>
            <person name="Hirokawa N."/>
            <person name="Hill D."/>
            <person name="Huminiecki L."/>
            <person name="Iacono M."/>
            <person name="Ikeo K."/>
            <person name="Iwama A."/>
            <person name="Ishikawa T."/>
            <person name="Jakt M."/>
            <person name="Kanapin A."/>
            <person name="Katoh M."/>
            <person name="Kawasawa Y."/>
            <person name="Kelso J."/>
            <person name="Kitamura H."/>
            <person name="Kitano H."/>
            <person name="Kollias G."/>
            <person name="Krishnan S.P."/>
            <person name="Kruger A."/>
            <person name="Kummerfeld S.K."/>
            <person name="Kurochkin I.V."/>
            <person name="Lareau L.F."/>
            <person name="Lazarevic D."/>
            <person name="Lipovich L."/>
            <person name="Liu J."/>
            <person name="Liuni S."/>
            <person name="McWilliam S."/>
            <person name="Madan Babu M."/>
            <person name="Madera M."/>
            <person name="Marchionni L."/>
            <person name="Matsuda H."/>
            <person name="Matsuzawa S."/>
            <person name="Miki H."/>
            <person name="Mignone F."/>
            <person name="Miyake S."/>
            <person name="Morris K."/>
            <person name="Mottagui-Tabar S."/>
            <person name="Mulder N."/>
            <person name="Nakano N."/>
            <person name="Nakauchi H."/>
            <person name="Ng P."/>
            <person name="Nilsson R."/>
            <person name="Nishiguchi S."/>
            <person name="Nishikawa S."/>
            <person name="Nori F."/>
            <person name="Ohara O."/>
            <person name="Okazaki Y."/>
            <person name="Orlando V."/>
            <person name="Pang K.C."/>
            <person name="Pavan W.J."/>
            <person name="Pavesi G."/>
            <person name="Pesole G."/>
            <person name="Petrovsky N."/>
            <person name="Piazza S."/>
            <person name="Reed J."/>
            <person name="Reid J.F."/>
            <person name="Ring B.Z."/>
            <person name="Ringwald M."/>
            <person name="Rost B."/>
            <person name="Ruan Y."/>
            <person name="Salzberg S.L."/>
            <person name="Sandelin A."/>
            <person name="Schneider C."/>
            <person name="Schoenbach C."/>
            <person name="Sekiguchi K."/>
            <person name="Semple C.A."/>
            <person name="Seno S."/>
            <person name="Sessa L."/>
            <person name="Sheng Y."/>
            <person name="Shibata Y."/>
            <person name="Shimada H."/>
            <person name="Shimada K."/>
            <person name="Silva D."/>
            <person name="Sinclair B."/>
            <person name="Sperling S."/>
            <person name="Stupka E."/>
            <person name="Sugiura K."/>
            <person name="Sultana R."/>
            <person name="Takenaka Y."/>
            <person name="Taki K."/>
            <person name="Tammoja K."/>
            <person name="Tan S.L."/>
            <person name="Tang S."/>
            <person name="Taylor M.S."/>
            <person name="Tegner J."/>
            <person name="Teichmann S.A."/>
            <person name="Ueda H.R."/>
            <person name="van Nimwegen E."/>
            <person name="Verardo R."/>
            <person name="Wei C.L."/>
            <person name="Yagi K."/>
            <person name="Yamanishi H."/>
            <person name="Zabarovsky E."/>
            <person name="Zhu S."/>
            <person name="Zimmer A."/>
            <person name="Hide W."/>
            <person name="Bult C."/>
            <person name="Grimmond S.M."/>
            <person name="Teasdale R.D."/>
            <person name="Liu E.T."/>
            <person name="Brusic V."/>
            <person name="Quackenbush J."/>
            <person name="Wahlestedt C."/>
            <person name="Mattick J.S."/>
            <person name="Hume D.A."/>
            <person name="Kai C."/>
            <person name="Sasaki D."/>
            <person name="Tomaru Y."/>
            <person name="Fukuda S."/>
            <person name="Kanamori-Katayama M."/>
            <person name="Suzuki M."/>
            <person name="Aoki J."/>
            <person name="Arakawa T."/>
            <person name="Iida J."/>
            <person name="Imamura K."/>
            <person name="Itoh M."/>
            <person name="Kato T."/>
            <person name="Kawaji H."/>
            <person name="Kawagashira N."/>
            <person name="Kawashima T."/>
            <person name="Kojima M."/>
            <person name="Kondo S."/>
            <person name="Konno H."/>
            <person name="Nakano K."/>
            <person name="Ninomiya N."/>
            <person name="Nishio T."/>
            <person name="Okada M."/>
            <person name="Plessy C."/>
            <person name="Shibata K."/>
            <person name="Shiraki T."/>
            <person name="Suzuki S."/>
            <person name="Tagami M."/>
            <person name="Waki K."/>
            <person name="Watahiki A."/>
            <person name="Okamura-Oho Y."/>
            <person name="Suzuki H."/>
            <person name="Kawai J."/>
            <person name="Hayashizaki Y."/>
        </authorList>
    </citation>
    <scope>NUCLEOTIDE SEQUENCE [LARGE SCALE MRNA]</scope>
    <source>
        <strain>C57BL/6J</strain>
        <tissue>Small intestine</tissue>
    </source>
</reference>
<reference key="3">
    <citation type="journal article" date="2004" name="Genome Res.">
        <title>The status, quality, and expansion of the NIH full-length cDNA project: the Mammalian Gene Collection (MGC).</title>
        <authorList>
            <consortium name="The MGC Project Team"/>
        </authorList>
    </citation>
    <scope>NUCLEOTIDE SEQUENCE [LARGE SCALE MRNA]</scope>
</reference>
<reference key="4">
    <citation type="submission" date="2007-04" db="UniProtKB">
        <authorList>
            <person name="Lubec G."/>
            <person name="Kang S.U."/>
        </authorList>
    </citation>
    <scope>PROTEIN SEQUENCE OF 46-86 AND 128-144</scope>
    <scope>IDENTIFICATION BY MASS SPECTROMETRY</scope>
    <source>
        <strain>C57BL/6J</strain>
        <tissue>Brain</tissue>
    </source>
</reference>
<reference key="5">
    <citation type="journal article" date="2010" name="Cell">
        <title>A tissue-specific atlas of mouse protein phosphorylation and expression.</title>
        <authorList>
            <person name="Huttlin E.L."/>
            <person name="Jedrychowski M.P."/>
            <person name="Elias J.E."/>
            <person name="Goswami T."/>
            <person name="Rad R."/>
            <person name="Beausoleil S.A."/>
            <person name="Villen J."/>
            <person name="Haas W."/>
            <person name="Sowa M.E."/>
            <person name="Gygi S.P."/>
        </authorList>
    </citation>
    <scope>IDENTIFICATION BY MASS SPECTROMETRY [LARGE SCALE ANALYSIS]</scope>
    <source>
        <tissue>Brain</tissue>
        <tissue>Brown adipose tissue</tissue>
        <tissue>Heart</tissue>
        <tissue>Kidney</tissue>
        <tissue>Liver</tissue>
        <tissue>Lung</tissue>
        <tissue>Pancreas</tissue>
        <tissue>Testis</tissue>
    </source>
</reference>
<reference evidence="7" key="6">
    <citation type="journal article" date="2024" name="Nat. Struct. Mol. Biol.">
        <title>SCAF1 drives the compositional diversity of mammalian respirasomes.</title>
        <authorList>
            <person name="Vercellino I."/>
            <person name="Sazanov L.A."/>
        </authorList>
    </citation>
    <scope>STRUCTURE BY ELECTRON MICROSCOPY (3.60 ANGSTROMS) IN COMPLEX WITH MITOCHONDRIAL RESPIRATORY SUPERCOMPLEX</scope>
    <scope>FUNCTION</scope>
    <scope>SUBCELLULAR LOCATION</scope>
    <scope>SUBUNIT</scope>
</reference>
<keyword id="KW-0002">3D-structure</keyword>
<keyword id="KW-0903">Direct protein sequencing</keyword>
<keyword id="KW-0249">Electron transport</keyword>
<keyword id="KW-0472">Membrane</keyword>
<keyword id="KW-0496">Mitochondrion</keyword>
<keyword id="KW-0999">Mitochondrion inner membrane</keyword>
<keyword id="KW-1185">Reference proteome</keyword>
<keyword id="KW-0679">Respiratory chain</keyword>
<keyword id="KW-0809">Transit peptide</keyword>
<keyword id="KW-0812">Transmembrane</keyword>
<keyword id="KW-1133">Transmembrane helix</keyword>
<keyword id="KW-0813">Transport</keyword>
<gene>
    <name type="primary">Ndufb11</name>
    <name type="synonym">Np15</name>
</gene>
<accession>O09111</accession>
<comment type="function">
    <text evidence="5">Accessory subunit of the mitochondrial membrane respiratory chain NADH dehydrogenase (Complex I), that is believed not to be involved in catalysis. Complex I functions in the transfer of electrons from NADH to the respiratory chain. The immediate electron acceptor for the enzyme is believed to be ubiquinone.</text>
</comment>
<comment type="subunit">
    <text evidence="5">Complex I is composed of 45 different subunits. Interacts with BCAP31.</text>
</comment>
<comment type="subcellular location">
    <subcellularLocation>
        <location evidence="5">Mitochondrion inner membrane</location>
        <topology evidence="3">Single-pass membrane protein</topology>
    </subcellularLocation>
    <text evidence="2">The interaction with BCAP31 mediates mitochondria localization.</text>
</comment>
<comment type="similarity">
    <text evidence="6">Belongs to the complex I NDUFB11 subunit family.</text>
</comment>
<comment type="sequence caution" evidence="6">
    <conflict type="erroneous initiation">
        <sequence resource="EMBL-CDS" id="AAH27265"/>
    </conflict>
</comment>
<comment type="sequence caution" evidence="6">
    <conflict type="erroneous initiation">
        <sequence resource="EMBL-CDS" id="BAC25760"/>
    </conflict>
</comment>
<comment type="sequence caution" evidence="6">
    <conflict type="erroneous initiation">
        <sequence resource="EMBL-CDS" id="CAA69961"/>
    </conflict>
</comment>
<protein>
    <recommendedName>
        <fullName>NADH dehydrogenase [ubiquinone] 1 beta subcomplex subunit 11, mitochondrial</fullName>
    </recommendedName>
    <alternativeName>
        <fullName>Complex I-ESSS</fullName>
        <shortName>CI-ESSS</shortName>
    </alternativeName>
    <alternativeName>
        <fullName>NADH-ubiquinone oxidoreductase ESSS subunit</fullName>
    </alternativeName>
    <alternativeName>
        <fullName>Neuronal protein 15.6</fullName>
        <shortName>Np15.6</shortName>
        <shortName>p15.6</shortName>
    </alternativeName>
</protein>
<feature type="transit peptide" description="Mitochondrion" evidence="1">
    <location>
        <begin position="1"/>
        <end position="29"/>
    </location>
</feature>
<feature type="chain" id="PRO_0000020058" description="NADH dehydrogenase [ubiquinone] 1 beta subcomplex subunit 11, mitochondrial">
    <location>
        <begin position="30"/>
        <end position="151"/>
    </location>
</feature>
<feature type="transmembrane region" description="Helical" evidence="3">
    <location>
        <begin position="87"/>
        <end position="107"/>
    </location>
</feature>
<feature type="region of interest" description="Disordered" evidence="4">
    <location>
        <begin position="40"/>
        <end position="62"/>
    </location>
</feature>
<feature type="turn" evidence="8">
    <location>
        <begin position="64"/>
        <end position="67"/>
    </location>
</feature>
<feature type="helix" evidence="8">
    <location>
        <begin position="78"/>
        <end position="92"/>
    </location>
</feature>
<feature type="turn" evidence="8">
    <location>
        <begin position="93"/>
        <end position="95"/>
    </location>
</feature>
<feature type="helix" evidence="8">
    <location>
        <begin position="96"/>
        <end position="105"/>
    </location>
</feature>
<feature type="helix" evidence="8">
    <location>
        <begin position="110"/>
        <end position="112"/>
    </location>
</feature>
<feature type="helix" evidence="8">
    <location>
        <begin position="113"/>
        <end position="129"/>
    </location>
</feature>
<feature type="helix" evidence="8">
    <location>
        <begin position="142"/>
        <end position="144"/>
    </location>
</feature>